<comment type="catalytic activity">
    <reaction>
        <text>catechol + O2 = (2Z,4E)-2-hydroxy-6-oxohexa-2,4-dienoate + H(+)</text>
        <dbReference type="Rhea" id="RHEA:17337"/>
        <dbReference type="ChEBI" id="CHEBI:15378"/>
        <dbReference type="ChEBI" id="CHEBI:15379"/>
        <dbReference type="ChEBI" id="CHEBI:18135"/>
        <dbReference type="ChEBI" id="CHEBI:71198"/>
        <dbReference type="EC" id="1.13.11.2"/>
    </reaction>
</comment>
<comment type="cofactor">
    <cofactor>
        <name>Fe(2+)</name>
        <dbReference type="ChEBI" id="CHEBI:29033"/>
    </cofactor>
</comment>
<comment type="similarity">
    <text evidence="3">Belongs to the extradiol ring-cleavage dioxygenase family.</text>
</comment>
<evidence type="ECO:0000250" key="1"/>
<evidence type="ECO:0000255" key="2">
    <source>
        <dbReference type="PROSITE-ProRule" id="PRU01163"/>
    </source>
</evidence>
<evidence type="ECO:0000305" key="3"/>
<gene>
    <name type="primary">pheB</name>
</gene>
<accession>P31003</accession>
<reference key="1">
    <citation type="submission" date="1992-07" db="EMBL/GenBank/DDBJ databases">
        <authorList>
            <person name="He Z.-Q."/>
            <person name="Mao Y.-M."/>
            <person name="Sheng Z.-J."/>
            <person name="Shen R.-Q."/>
        </authorList>
    </citation>
    <scope>NUCLEOTIDE SEQUENCE [GENOMIC DNA]</scope>
    <source>
        <strain>FDTP-3</strain>
    </source>
</reference>
<dbReference type="EC" id="1.13.11.2"/>
<dbReference type="EMBL" id="X67860">
    <property type="protein sequence ID" value="CAA48044.1"/>
    <property type="molecule type" value="Genomic_DNA"/>
</dbReference>
<dbReference type="PIR" id="JC1324">
    <property type="entry name" value="JC1324"/>
</dbReference>
<dbReference type="SMR" id="P31003"/>
<dbReference type="GO" id="GO:0018577">
    <property type="term" value="F:catechol 2,3-dioxygenase activity"/>
    <property type="evidence" value="ECO:0007669"/>
    <property type="project" value="UniProtKB-EC"/>
</dbReference>
<dbReference type="GO" id="GO:0008198">
    <property type="term" value="F:ferrous iron binding"/>
    <property type="evidence" value="ECO:0007669"/>
    <property type="project" value="InterPro"/>
</dbReference>
<dbReference type="GO" id="GO:0009056">
    <property type="term" value="P:catabolic process"/>
    <property type="evidence" value="ECO:0007669"/>
    <property type="project" value="UniProtKB-KW"/>
</dbReference>
<dbReference type="CDD" id="cd09014">
    <property type="entry name" value="BphC-JF8_C_like"/>
    <property type="match status" value="1"/>
</dbReference>
<dbReference type="CDD" id="cd09013">
    <property type="entry name" value="BphC-JF8_N_like"/>
    <property type="match status" value="1"/>
</dbReference>
<dbReference type="Gene3D" id="3.10.180.10">
    <property type="entry name" value="2,3-Dihydroxybiphenyl 1,2-Dioxygenase, domain 1"/>
    <property type="match status" value="2"/>
</dbReference>
<dbReference type="InterPro" id="IPR017624">
    <property type="entry name" value="Catechol_2-3_dOase"/>
</dbReference>
<dbReference type="InterPro" id="IPR051332">
    <property type="entry name" value="Fosfomycin_Res_Enzymes"/>
</dbReference>
<dbReference type="InterPro" id="IPR029068">
    <property type="entry name" value="Glyas_Bleomycin-R_OHBP_Dase"/>
</dbReference>
<dbReference type="InterPro" id="IPR004360">
    <property type="entry name" value="Glyas_Fos-R_dOase_dom"/>
</dbReference>
<dbReference type="InterPro" id="IPR037523">
    <property type="entry name" value="VOC"/>
</dbReference>
<dbReference type="InterPro" id="IPR000486">
    <property type="entry name" value="Xdiol_ring_cleave_dOase_1/2"/>
</dbReference>
<dbReference type="NCBIfam" id="TIGR03211">
    <property type="entry name" value="catechol_2_3"/>
    <property type="match status" value="1"/>
</dbReference>
<dbReference type="PANTHER" id="PTHR36113:SF6">
    <property type="entry name" value="FOSFOMYCIN RESISTANCE PROTEIN FOSX"/>
    <property type="match status" value="1"/>
</dbReference>
<dbReference type="PANTHER" id="PTHR36113">
    <property type="entry name" value="LYASE, PUTATIVE-RELATED-RELATED"/>
    <property type="match status" value="1"/>
</dbReference>
<dbReference type="Pfam" id="PF00903">
    <property type="entry name" value="Glyoxalase"/>
    <property type="match status" value="2"/>
</dbReference>
<dbReference type="SUPFAM" id="SSF54593">
    <property type="entry name" value="Glyoxalase/Bleomycin resistance protein/Dihydroxybiphenyl dioxygenase"/>
    <property type="match status" value="1"/>
</dbReference>
<dbReference type="PROSITE" id="PS00082">
    <property type="entry name" value="EXTRADIOL_DIOXYGENAS"/>
    <property type="match status" value="1"/>
</dbReference>
<dbReference type="PROSITE" id="PS51819">
    <property type="entry name" value="VOC"/>
    <property type="match status" value="2"/>
</dbReference>
<name>PHEB_GEOSE</name>
<feature type="chain" id="PRO_0000085025" description="Metapyrocatechase">
    <location>
        <begin position="1"/>
        <end position="327"/>
    </location>
</feature>
<feature type="domain" description="VOC 1" evidence="2">
    <location>
        <begin position="14"/>
        <end position="126"/>
    </location>
</feature>
<feature type="domain" description="VOC 2" evidence="2">
    <location>
        <begin position="156"/>
        <end position="276"/>
    </location>
</feature>
<feature type="binding site" evidence="1">
    <location>
        <position position="159"/>
    </location>
    <ligand>
        <name>Fe cation</name>
        <dbReference type="ChEBI" id="CHEBI:24875"/>
    </ligand>
</feature>
<feature type="binding site" evidence="1">
    <location>
        <position position="221"/>
    </location>
    <ligand>
        <name>Fe cation</name>
        <dbReference type="ChEBI" id="CHEBI:24875"/>
    </ligand>
</feature>
<feature type="binding site" evidence="1">
    <location>
        <position position="272"/>
    </location>
    <ligand>
        <name>Fe cation</name>
        <dbReference type="ChEBI" id="CHEBI:24875"/>
    </ligand>
</feature>
<keyword id="KW-0058">Aromatic hydrocarbons catabolism</keyword>
<keyword id="KW-0223">Dioxygenase</keyword>
<keyword id="KW-0408">Iron</keyword>
<keyword id="KW-0479">Metal-binding</keyword>
<keyword id="KW-0560">Oxidoreductase</keyword>
<keyword id="KW-0677">Repeat</keyword>
<protein>
    <recommendedName>
        <fullName>Metapyrocatechase</fullName>
        <shortName>MPC</shortName>
        <ecNumber>1.13.11.2</ecNumber>
    </recommendedName>
    <alternativeName>
        <fullName>CatO2ase</fullName>
    </alternativeName>
    <alternativeName>
        <fullName>Catechol 2,3-dioxygenase</fullName>
    </alternativeName>
</protein>
<organism>
    <name type="scientific">Geobacillus stearothermophilus</name>
    <name type="common">Bacillus stearothermophilus</name>
    <dbReference type="NCBI Taxonomy" id="1422"/>
    <lineage>
        <taxon>Bacteria</taxon>
        <taxon>Bacillati</taxon>
        <taxon>Bacillota</taxon>
        <taxon>Bacilli</taxon>
        <taxon>Bacillales</taxon>
        <taxon>Anoxybacillaceae</taxon>
        <taxon>Geobacillus</taxon>
    </lineage>
</organism>
<proteinExistence type="inferred from homology"/>
<sequence>MSKNFQEPIFDVAQLAHVELLSPKLEESIVFFTKYLGMEVTARAGNSVYLRAYEDFYHNTLKITESAEAGLGHVGWRASSPQALERRVLELEKSGLGRGWIDGDIGHGKAYQFTTPDGHQMEIFFEVEYYKPQPEQKTKLLNRPSKRPAQGVPVRRLDHINLMTSNPGVDTQFMIDTLGFRLREQIRDKGKILGSWISVSNLVHEIAFMQEPNQEKGKLHHLCYWYGIPQNLYDLADLLKDHEYFIEVPPNKHGISQAFCMYVYEPGGNRIELFGDAGYLITDPTWEPVIWEMEDVPGNGDTWIGTAFPDSWWLRGTPVTTKEVVKP</sequence>